<organism>
    <name type="scientific">Thermoplasma volcanium (strain ATCC 51530 / DSM 4299 / JCM 9571 / NBRC 15438 / GSS1)</name>
    <dbReference type="NCBI Taxonomy" id="273116"/>
    <lineage>
        <taxon>Archaea</taxon>
        <taxon>Methanobacteriati</taxon>
        <taxon>Thermoplasmatota</taxon>
        <taxon>Thermoplasmata</taxon>
        <taxon>Thermoplasmatales</taxon>
        <taxon>Thermoplasmataceae</taxon>
        <taxon>Thermoplasma</taxon>
    </lineage>
</organism>
<keyword id="KW-0963">Cytoplasm</keyword>
<keyword id="KW-0570">Pentose shunt</keyword>
<keyword id="KW-0704">Schiff base</keyword>
<keyword id="KW-0808">Transferase</keyword>
<dbReference type="EC" id="2.2.1.2"/>
<dbReference type="EMBL" id="BA000011">
    <property type="protein sequence ID" value="BAB59807.1"/>
    <property type="molecule type" value="Genomic_DNA"/>
</dbReference>
<dbReference type="RefSeq" id="WP_010916924.1">
    <property type="nucleotide sequence ID" value="NC_002689.2"/>
</dbReference>
<dbReference type="SMR" id="Q97AZ4"/>
<dbReference type="STRING" id="273116.gene:9381453"/>
<dbReference type="PaxDb" id="273116-14324881"/>
<dbReference type="GeneID" id="1441772"/>
<dbReference type="KEGG" id="tvo:TVG0660430"/>
<dbReference type="eggNOG" id="arCOG05061">
    <property type="taxonomic scope" value="Archaea"/>
</dbReference>
<dbReference type="HOGENOM" id="CLU_079764_0_0_2"/>
<dbReference type="OrthoDB" id="6661at2157"/>
<dbReference type="PhylomeDB" id="Q97AZ4"/>
<dbReference type="UniPathway" id="UPA00115">
    <property type="reaction ID" value="UER00414"/>
</dbReference>
<dbReference type="Proteomes" id="UP000001017">
    <property type="component" value="Chromosome"/>
</dbReference>
<dbReference type="GO" id="GO:0005737">
    <property type="term" value="C:cytoplasm"/>
    <property type="evidence" value="ECO:0007669"/>
    <property type="project" value="UniProtKB-SubCell"/>
</dbReference>
<dbReference type="GO" id="GO:0016832">
    <property type="term" value="F:aldehyde-lyase activity"/>
    <property type="evidence" value="ECO:0007669"/>
    <property type="project" value="InterPro"/>
</dbReference>
<dbReference type="GO" id="GO:0004801">
    <property type="term" value="F:transaldolase activity"/>
    <property type="evidence" value="ECO:0007669"/>
    <property type="project" value="UniProtKB-UniRule"/>
</dbReference>
<dbReference type="GO" id="GO:0005975">
    <property type="term" value="P:carbohydrate metabolic process"/>
    <property type="evidence" value="ECO:0007669"/>
    <property type="project" value="InterPro"/>
</dbReference>
<dbReference type="GO" id="GO:0006098">
    <property type="term" value="P:pentose-phosphate shunt"/>
    <property type="evidence" value="ECO:0007669"/>
    <property type="project" value="UniProtKB-UniRule"/>
</dbReference>
<dbReference type="CDD" id="cd00956">
    <property type="entry name" value="Transaldolase_FSA"/>
    <property type="match status" value="1"/>
</dbReference>
<dbReference type="FunFam" id="3.20.20.70:FF:000018">
    <property type="entry name" value="Probable transaldolase"/>
    <property type="match status" value="1"/>
</dbReference>
<dbReference type="Gene3D" id="3.20.20.70">
    <property type="entry name" value="Aldolase class I"/>
    <property type="match status" value="1"/>
</dbReference>
<dbReference type="HAMAP" id="MF_00494">
    <property type="entry name" value="Transaldolase_3b"/>
    <property type="match status" value="1"/>
</dbReference>
<dbReference type="InterPro" id="IPR013785">
    <property type="entry name" value="Aldolase_TIM"/>
</dbReference>
<dbReference type="InterPro" id="IPR001585">
    <property type="entry name" value="TAL/FSA"/>
</dbReference>
<dbReference type="InterPro" id="IPR022999">
    <property type="entry name" value="Transaldolase_3B"/>
</dbReference>
<dbReference type="InterPro" id="IPR004731">
    <property type="entry name" value="Transaldolase_3B/F6P_aldolase"/>
</dbReference>
<dbReference type="InterPro" id="IPR018225">
    <property type="entry name" value="Transaldolase_AS"/>
</dbReference>
<dbReference type="InterPro" id="IPR033919">
    <property type="entry name" value="TSA/FSA_arc/bac"/>
</dbReference>
<dbReference type="NCBIfam" id="TIGR00875">
    <property type="entry name" value="fsa_talC_mipB"/>
    <property type="match status" value="1"/>
</dbReference>
<dbReference type="PANTHER" id="PTHR10683:SF40">
    <property type="entry name" value="FRUCTOSE-6-PHOSPHATE ALDOLASE 1-RELATED"/>
    <property type="match status" value="1"/>
</dbReference>
<dbReference type="PANTHER" id="PTHR10683">
    <property type="entry name" value="TRANSALDOLASE"/>
    <property type="match status" value="1"/>
</dbReference>
<dbReference type="Pfam" id="PF00923">
    <property type="entry name" value="TAL_FSA"/>
    <property type="match status" value="1"/>
</dbReference>
<dbReference type="SUPFAM" id="SSF51569">
    <property type="entry name" value="Aldolase"/>
    <property type="match status" value="1"/>
</dbReference>
<dbReference type="PROSITE" id="PS01054">
    <property type="entry name" value="TRANSALDOLASE_1"/>
    <property type="match status" value="1"/>
</dbReference>
<dbReference type="PROSITE" id="PS00958">
    <property type="entry name" value="TRANSALDOLASE_2"/>
    <property type="match status" value="1"/>
</dbReference>
<feature type="chain" id="PRO_0000173692" description="Probable transaldolase">
    <location>
        <begin position="1"/>
        <end position="223"/>
    </location>
</feature>
<feature type="active site" description="Schiff-base intermediate with substrate" evidence="1">
    <location>
        <position position="86"/>
    </location>
</feature>
<comment type="function">
    <text evidence="1">Transaldolase is important for the balance of metabolites in the pentose-phosphate pathway.</text>
</comment>
<comment type="catalytic activity">
    <reaction>
        <text>D-sedoheptulose 7-phosphate + D-glyceraldehyde 3-phosphate = D-erythrose 4-phosphate + beta-D-fructose 6-phosphate</text>
        <dbReference type="Rhea" id="RHEA:17053"/>
        <dbReference type="ChEBI" id="CHEBI:16897"/>
        <dbReference type="ChEBI" id="CHEBI:57483"/>
        <dbReference type="ChEBI" id="CHEBI:57634"/>
        <dbReference type="ChEBI" id="CHEBI:59776"/>
        <dbReference type="EC" id="2.2.1.2"/>
    </reaction>
</comment>
<comment type="pathway">
    <text>Carbohydrate degradation; pentose phosphate pathway; D-glyceraldehyde 3-phosphate and beta-D-fructose 6-phosphate from D-ribose 5-phosphate and D-xylulose 5-phosphate (non-oxidative stage): step 2/3.</text>
</comment>
<comment type="subcellular location">
    <subcellularLocation>
        <location evidence="1">Cytoplasm</location>
    </subcellularLocation>
</comment>
<comment type="similarity">
    <text evidence="2">Belongs to the transaldolase family. Type 3B subfamily.</text>
</comment>
<gene>
    <name type="primary">tal</name>
    <name type="ordered locus">TV0665</name>
    <name type="ORF">TVG0660430</name>
</gene>
<protein>
    <recommendedName>
        <fullName>Probable transaldolase</fullName>
        <ecNumber>2.2.1.2</ecNumber>
    </recommendedName>
</protein>
<reference key="1">
    <citation type="journal article" date="2000" name="Proc. Natl. Acad. Sci. U.S.A.">
        <title>Archaeal adaptation to higher temperatures revealed by genomic sequence of Thermoplasma volcanium.</title>
        <authorList>
            <person name="Kawashima T."/>
            <person name="Amano N."/>
            <person name="Koike H."/>
            <person name="Makino S."/>
            <person name="Higuchi S."/>
            <person name="Kawashima-Ohya Y."/>
            <person name="Watanabe K."/>
            <person name="Yamazaki M."/>
            <person name="Kanehori K."/>
            <person name="Kawamoto T."/>
            <person name="Nunoshiba T."/>
            <person name="Yamamoto Y."/>
            <person name="Aramaki H."/>
            <person name="Makino K."/>
            <person name="Suzuki M."/>
        </authorList>
    </citation>
    <scope>NUCLEOTIDE SEQUENCE [LARGE SCALE GENOMIC DNA]</scope>
    <source>
        <strain>ATCC 51530 / DSM 4299 / JCM 9571 / NBRC 15438 / GSS1</strain>
    </source>
</reference>
<name>TAL_THEVO</name>
<proteinExistence type="inferred from homology"/>
<sequence>MKIFLDTANISEIKEGIDLGLVDGVTTNPTLISKEAGGSKKYAEIIKEILKIVDGPVSVEVVSTKSDGMVEEARKIHALGDNAVVKIPMTDEGLKAIRKLSQENIETNCTLVFNPIQALLAAKSGATYVSPFVGRLDDIGQDGMQIIDEIKTIFNNYIIKTQILVASVRNPIHVLRAAIIGADVVTIPFSVLKLLIKHPKTDEGLTRFLEDWKKVSPDGKFII</sequence>
<accession>Q97AZ4</accession>
<evidence type="ECO:0000250" key="1"/>
<evidence type="ECO:0000305" key="2"/>